<reference key="1">
    <citation type="submission" date="2007-06" db="EMBL/GenBank/DDBJ databases">
        <authorList>
            <person name="Brinkac L.M."/>
            <person name="Daugherty S."/>
            <person name="Dodson R.J."/>
            <person name="Madupu R."/>
            <person name="Brown J.L."/>
            <person name="Bruce D."/>
            <person name="Detter C."/>
            <person name="Munk C."/>
            <person name="Smith L.A."/>
            <person name="Smith T.J."/>
            <person name="White O."/>
            <person name="Brettin T.S."/>
        </authorList>
    </citation>
    <scope>NUCLEOTIDE SEQUENCE [LARGE SCALE GENOMIC DNA]</scope>
    <source>
        <strain>Langeland / NCTC 10281 / Type F</strain>
    </source>
</reference>
<gene>
    <name evidence="1" type="primary">comB</name>
    <name type="ordered locus">CLI_3775</name>
</gene>
<evidence type="ECO:0000255" key="1">
    <source>
        <dbReference type="HAMAP-Rule" id="MF_00490"/>
    </source>
</evidence>
<sequence>MNIDIVISADHIDEKRLINKTVIIIDILRATSVITTAINNGCKKVIPVLTVEEAKDIAKNSKEDIILGGERNALKIDGFNFSNSPLEYTKKYVEGKTVVLSTTNGTRAINNSFNAKTILISALINSKATAKAIDKLNEELIIINSGTNGQFSIDDFICSGYLIDCLYNIRKDLELSDIAKTAHYIYTNNKDIESFVKKATHYSRLKSLNLEKDLEYCFQKDIIDVVPQYKDGYIIKSNI</sequence>
<comment type="catalytic activity">
    <reaction evidence="1">
        <text>(2R)-O-phospho-3-sulfolactate + H2O = (2R)-3-sulfolactate + phosphate</text>
        <dbReference type="Rhea" id="RHEA:23416"/>
        <dbReference type="ChEBI" id="CHEBI:15377"/>
        <dbReference type="ChEBI" id="CHEBI:15597"/>
        <dbReference type="ChEBI" id="CHEBI:43474"/>
        <dbReference type="ChEBI" id="CHEBI:58738"/>
        <dbReference type="EC" id="3.1.3.71"/>
    </reaction>
</comment>
<comment type="cofactor">
    <cofactor evidence="1">
        <name>Mg(2+)</name>
        <dbReference type="ChEBI" id="CHEBI:18420"/>
    </cofactor>
</comment>
<comment type="similarity">
    <text evidence="1">Belongs to the ComB family.</text>
</comment>
<accession>A7GJE7</accession>
<dbReference type="EC" id="3.1.3.71" evidence="1"/>
<dbReference type="EMBL" id="CP000728">
    <property type="protein sequence ID" value="ABS40689.1"/>
    <property type="molecule type" value="Genomic_DNA"/>
</dbReference>
<dbReference type="RefSeq" id="WP_012101169.1">
    <property type="nucleotide sequence ID" value="NC_009699.1"/>
</dbReference>
<dbReference type="SMR" id="A7GJE7"/>
<dbReference type="KEGG" id="cbf:CLI_3775"/>
<dbReference type="HOGENOM" id="CLU_070028_0_0_9"/>
<dbReference type="Proteomes" id="UP000002410">
    <property type="component" value="Chromosome"/>
</dbReference>
<dbReference type="GO" id="GO:0050532">
    <property type="term" value="F:2-phosphosulfolactate phosphatase activity"/>
    <property type="evidence" value="ECO:0007669"/>
    <property type="project" value="UniProtKB-UniRule"/>
</dbReference>
<dbReference type="GO" id="GO:0000287">
    <property type="term" value="F:magnesium ion binding"/>
    <property type="evidence" value="ECO:0007669"/>
    <property type="project" value="UniProtKB-UniRule"/>
</dbReference>
<dbReference type="GO" id="GO:0050545">
    <property type="term" value="F:sulfopyruvate decarboxylase activity"/>
    <property type="evidence" value="ECO:0007669"/>
    <property type="project" value="TreeGrafter"/>
</dbReference>
<dbReference type="FunFam" id="3.90.1560.10:FF:000001">
    <property type="entry name" value="Probable 2-phosphosulfolactate phosphatase"/>
    <property type="match status" value="1"/>
</dbReference>
<dbReference type="Gene3D" id="3.90.1560.10">
    <property type="entry name" value="ComB-like"/>
    <property type="match status" value="1"/>
</dbReference>
<dbReference type="HAMAP" id="MF_00490">
    <property type="entry name" value="ComB"/>
    <property type="match status" value="1"/>
</dbReference>
<dbReference type="InterPro" id="IPR005238">
    <property type="entry name" value="ComB-like"/>
</dbReference>
<dbReference type="InterPro" id="IPR036702">
    <property type="entry name" value="ComB-like_sf"/>
</dbReference>
<dbReference type="NCBIfam" id="NF002052">
    <property type="entry name" value="PRK00886.1-1"/>
    <property type="match status" value="1"/>
</dbReference>
<dbReference type="NCBIfam" id="NF002055">
    <property type="entry name" value="PRK00886.1-4"/>
    <property type="match status" value="1"/>
</dbReference>
<dbReference type="PANTHER" id="PTHR37311">
    <property type="entry name" value="2-PHOSPHOSULFOLACTATE PHOSPHATASE-RELATED"/>
    <property type="match status" value="1"/>
</dbReference>
<dbReference type="PANTHER" id="PTHR37311:SF1">
    <property type="entry name" value="2-PHOSPHOSULFOLACTATE PHOSPHATASE-RELATED"/>
    <property type="match status" value="1"/>
</dbReference>
<dbReference type="Pfam" id="PF04029">
    <property type="entry name" value="2-ph_phosp"/>
    <property type="match status" value="1"/>
</dbReference>
<dbReference type="SUPFAM" id="SSF142823">
    <property type="entry name" value="ComB-like"/>
    <property type="match status" value="1"/>
</dbReference>
<organism>
    <name type="scientific">Clostridium botulinum (strain Langeland / NCTC 10281 / Type F)</name>
    <dbReference type="NCBI Taxonomy" id="441772"/>
    <lineage>
        <taxon>Bacteria</taxon>
        <taxon>Bacillati</taxon>
        <taxon>Bacillota</taxon>
        <taxon>Clostridia</taxon>
        <taxon>Eubacteriales</taxon>
        <taxon>Clostridiaceae</taxon>
        <taxon>Clostridium</taxon>
    </lineage>
</organism>
<feature type="chain" id="PRO_1000014461" description="Probable 2-phosphosulfolactate phosphatase">
    <location>
        <begin position="1"/>
        <end position="239"/>
    </location>
</feature>
<keyword id="KW-0378">Hydrolase</keyword>
<keyword id="KW-0460">Magnesium</keyword>
<proteinExistence type="inferred from homology"/>
<name>COMB_CLOBL</name>
<protein>
    <recommendedName>
        <fullName evidence="1">Probable 2-phosphosulfolactate phosphatase</fullName>
        <ecNumber evidence="1">3.1.3.71</ecNumber>
    </recommendedName>
</protein>